<accession>C3N6N2</accession>
<evidence type="ECO:0000255" key="1">
    <source>
        <dbReference type="HAMAP-Rule" id="MF_01833"/>
    </source>
</evidence>
<name>ENDA_SACI3</name>
<proteinExistence type="inferred from homology"/>
<protein>
    <recommendedName>
        <fullName evidence="1">tRNA-splicing endonuclease</fullName>
        <ecNumber evidence="1">4.6.1.16</ecNumber>
    </recommendedName>
    <alternativeName>
        <fullName evidence="1">tRNA-intron endonuclease</fullName>
    </alternativeName>
</protein>
<comment type="function">
    <text evidence="1">Endonuclease that removes tRNA introns. Cleaves pre-tRNA at the 5'- and 3'-splice sites to release the intron. The products are an intron and two tRNA half-molecules bearing 2',3' cyclic phosphate and 5'-OH termini. Recognizes a pseudosymmetric substrate in which 2 bulged loops of 3 bases are separated by a stem of 4 bp.</text>
</comment>
<comment type="catalytic activity">
    <reaction evidence="1">
        <text>pretRNA = a 3'-half-tRNA molecule with a 5'-OH end + a 5'-half-tRNA molecule with a 2',3'-cyclic phosphate end + an intron with a 2',3'-cyclic phosphate and a 5'-hydroxyl terminus.</text>
        <dbReference type="EC" id="4.6.1.16"/>
    </reaction>
</comment>
<comment type="subunit">
    <text evidence="1">Homotetramer; although the tetramer contains four active sites, only two participate in the cleavage. Therefore, it should be considered as a dimer of dimers.</text>
</comment>
<comment type="similarity">
    <text evidence="1">Belongs to the tRNA-intron endonuclease family. Archaeal short subfamily.</text>
</comment>
<gene>
    <name evidence="1" type="primary">endA</name>
    <name type="ordered locus">M1627_1782</name>
</gene>
<dbReference type="EC" id="4.6.1.16" evidence="1"/>
<dbReference type="EMBL" id="CP001401">
    <property type="protein sequence ID" value="ACP55657.1"/>
    <property type="molecule type" value="Genomic_DNA"/>
</dbReference>
<dbReference type="RefSeq" id="WP_012718943.1">
    <property type="nucleotide sequence ID" value="NC_012632.1"/>
</dbReference>
<dbReference type="SMR" id="C3N6N2"/>
<dbReference type="GeneID" id="84062023"/>
<dbReference type="KEGG" id="sim:M1627_1782"/>
<dbReference type="HOGENOM" id="CLU_114393_0_0_2"/>
<dbReference type="Proteomes" id="UP000002307">
    <property type="component" value="Chromosome"/>
</dbReference>
<dbReference type="GO" id="GO:0005737">
    <property type="term" value="C:cytoplasm"/>
    <property type="evidence" value="ECO:0007669"/>
    <property type="project" value="TreeGrafter"/>
</dbReference>
<dbReference type="GO" id="GO:0016829">
    <property type="term" value="F:lyase activity"/>
    <property type="evidence" value="ECO:0007669"/>
    <property type="project" value="UniProtKB-KW"/>
</dbReference>
<dbReference type="GO" id="GO:0003676">
    <property type="term" value="F:nucleic acid binding"/>
    <property type="evidence" value="ECO:0007669"/>
    <property type="project" value="InterPro"/>
</dbReference>
<dbReference type="GO" id="GO:0000213">
    <property type="term" value="F:tRNA-intron endonuclease activity"/>
    <property type="evidence" value="ECO:0007669"/>
    <property type="project" value="UniProtKB-UniRule"/>
</dbReference>
<dbReference type="GO" id="GO:0006388">
    <property type="term" value="P:tRNA splicing, via endonucleolytic cleavage and ligation"/>
    <property type="evidence" value="ECO:0007669"/>
    <property type="project" value="UniProtKB-UniRule"/>
</dbReference>
<dbReference type="CDD" id="cd22363">
    <property type="entry name" value="tRNA-intron_lyase_C"/>
    <property type="match status" value="1"/>
</dbReference>
<dbReference type="FunFam" id="3.40.1350.10:FF:000006">
    <property type="entry name" value="tRNA-splicing endonuclease"/>
    <property type="match status" value="1"/>
</dbReference>
<dbReference type="Gene3D" id="3.40.1350.10">
    <property type="match status" value="1"/>
</dbReference>
<dbReference type="Gene3D" id="3.40.1170.20">
    <property type="entry name" value="tRNA intron endonuclease, N-terminal domain"/>
    <property type="match status" value="1"/>
</dbReference>
<dbReference type="HAMAP" id="MF_01833">
    <property type="entry name" value="EndA_short"/>
    <property type="match status" value="1"/>
</dbReference>
<dbReference type="InterPro" id="IPR011856">
    <property type="entry name" value="tRNA_endonuc-like_dom_sf"/>
</dbReference>
<dbReference type="InterPro" id="IPR036167">
    <property type="entry name" value="tRNA_intron_Endo_cat-like_sf"/>
</dbReference>
<dbReference type="InterPro" id="IPR006677">
    <property type="entry name" value="tRNA_intron_Endonuc_cat-like"/>
</dbReference>
<dbReference type="InterPro" id="IPR006678">
    <property type="entry name" value="tRNA_intron_Endonuc_N"/>
</dbReference>
<dbReference type="InterPro" id="IPR036740">
    <property type="entry name" value="tRNA_intron_Endonuc_N_sf"/>
</dbReference>
<dbReference type="InterPro" id="IPR006676">
    <property type="entry name" value="tRNA_splic"/>
</dbReference>
<dbReference type="InterPro" id="IPR016442">
    <property type="entry name" value="tRNA_splic_arch_short"/>
</dbReference>
<dbReference type="NCBIfam" id="TIGR00324">
    <property type="entry name" value="endA"/>
    <property type="match status" value="1"/>
</dbReference>
<dbReference type="PANTHER" id="PTHR21227">
    <property type="entry name" value="TRNA-SPLICING ENDONUCLEASE SUBUNIT SEN2"/>
    <property type="match status" value="1"/>
</dbReference>
<dbReference type="PANTHER" id="PTHR21227:SF0">
    <property type="entry name" value="TRNA-SPLICING ENDONUCLEASE SUBUNIT SEN2"/>
    <property type="match status" value="1"/>
</dbReference>
<dbReference type="Pfam" id="PF01974">
    <property type="entry name" value="tRNA_int_endo"/>
    <property type="match status" value="1"/>
</dbReference>
<dbReference type="Pfam" id="PF02778">
    <property type="entry name" value="tRNA_int_endo_N"/>
    <property type="match status" value="1"/>
</dbReference>
<dbReference type="PIRSF" id="PIRSF005285">
    <property type="entry name" value="tRNA_splic_archaea"/>
    <property type="match status" value="1"/>
</dbReference>
<dbReference type="SUPFAM" id="SSF53032">
    <property type="entry name" value="tRNA-intron endonuclease catalytic domain-like"/>
    <property type="match status" value="1"/>
</dbReference>
<dbReference type="SUPFAM" id="SSF55267">
    <property type="entry name" value="tRNA-intron endonuclease N-terminal domain-like"/>
    <property type="match status" value="1"/>
</dbReference>
<reference key="1">
    <citation type="journal article" date="2009" name="Proc. Natl. Acad. Sci. U.S.A.">
        <title>Biogeography of the Sulfolobus islandicus pan-genome.</title>
        <authorList>
            <person name="Reno M.L."/>
            <person name="Held N.L."/>
            <person name="Fields C.J."/>
            <person name="Burke P.V."/>
            <person name="Whitaker R.J."/>
        </authorList>
    </citation>
    <scope>NUCLEOTIDE SEQUENCE [LARGE SCALE GENOMIC DNA]</scope>
    <source>
        <strain>M.16.27</strain>
    </source>
</reference>
<keyword id="KW-0456">Lyase</keyword>
<keyword id="KW-0819">tRNA processing</keyword>
<organism>
    <name type="scientific">Saccharolobus islandicus (strain M.16.27)</name>
    <name type="common">Sulfolobus islandicus</name>
    <dbReference type="NCBI Taxonomy" id="427318"/>
    <lineage>
        <taxon>Archaea</taxon>
        <taxon>Thermoproteota</taxon>
        <taxon>Thermoprotei</taxon>
        <taxon>Sulfolobales</taxon>
        <taxon>Sulfolobaceae</taxon>
        <taxon>Saccharolobus</taxon>
    </lineage>
</organism>
<feature type="chain" id="PRO_1000216079" description="tRNA-splicing endonuclease">
    <location>
        <begin position="1"/>
        <end position="182"/>
    </location>
</feature>
<feature type="active site" evidence="1">
    <location>
        <position position="119"/>
    </location>
</feature>
<feature type="active site" evidence="1">
    <location>
        <position position="127"/>
    </location>
</feature>
<feature type="active site" evidence="1">
    <location>
        <position position="158"/>
    </location>
</feature>
<sequence length="182" mass="20798">MVKALLVGSKVLIPNVDESRYIYSNGFYGKAIGISKPKGPKDIIRPLELSLIESVYLAKKGLIKVIDKNGEVLEYEKLYEYSSKIINKFDIMYRVYEDLREKGFIVRSGVKYGADFAVYTLGPGLEHAPYVVIAVDIDEEITPHELLSFGRVSHSTRKRLVLALVDRKSESVRYIMFKWVKM</sequence>